<name>HRCA_BACLD</name>
<gene>
    <name evidence="1" type="primary">hrcA</name>
    <name type="ordered locus">BLi02741</name>
    <name type="ordered locus">BL02094</name>
</gene>
<feature type="chain" id="PRO_1000010378" description="Heat-inducible transcription repressor HrcA">
    <location>
        <begin position="1"/>
        <end position="343"/>
    </location>
</feature>
<comment type="function">
    <text evidence="1">Negative regulator of class I heat shock genes (grpE-dnaK-dnaJ and groELS operons). Prevents heat-shock induction of these operons.</text>
</comment>
<comment type="similarity">
    <text evidence="1">Belongs to the HrcA family.</text>
</comment>
<proteinExistence type="inferred from homology"/>
<accession>Q65H52</accession>
<accession>Q62SK8</accession>
<dbReference type="EMBL" id="CP000002">
    <property type="protein sequence ID" value="AAU24251.1"/>
    <property type="molecule type" value="Genomic_DNA"/>
</dbReference>
<dbReference type="EMBL" id="AE017333">
    <property type="protein sequence ID" value="AAU41612.1"/>
    <property type="molecule type" value="Genomic_DNA"/>
</dbReference>
<dbReference type="RefSeq" id="WP_003183671.1">
    <property type="nucleotide sequence ID" value="NC_006322.1"/>
</dbReference>
<dbReference type="SMR" id="Q65H52"/>
<dbReference type="STRING" id="279010.BL02094"/>
<dbReference type="GeneID" id="92860668"/>
<dbReference type="KEGG" id="bld:BLi02741"/>
<dbReference type="KEGG" id="bli:BL02094"/>
<dbReference type="eggNOG" id="COG1420">
    <property type="taxonomic scope" value="Bacteria"/>
</dbReference>
<dbReference type="HOGENOM" id="CLU_050019_1_0_9"/>
<dbReference type="Proteomes" id="UP000000606">
    <property type="component" value="Chromosome"/>
</dbReference>
<dbReference type="GO" id="GO:0003677">
    <property type="term" value="F:DNA binding"/>
    <property type="evidence" value="ECO:0007669"/>
    <property type="project" value="InterPro"/>
</dbReference>
<dbReference type="GO" id="GO:0045892">
    <property type="term" value="P:negative regulation of DNA-templated transcription"/>
    <property type="evidence" value="ECO:0007669"/>
    <property type="project" value="UniProtKB-UniRule"/>
</dbReference>
<dbReference type="FunFam" id="1.10.10.10:FF:000049">
    <property type="entry name" value="Heat-inducible transcription repressor HrcA"/>
    <property type="match status" value="1"/>
</dbReference>
<dbReference type="Gene3D" id="3.30.450.40">
    <property type="match status" value="1"/>
</dbReference>
<dbReference type="Gene3D" id="3.30.390.60">
    <property type="entry name" value="Heat-inducible transcription repressor hrca homolog, domain 3"/>
    <property type="match status" value="1"/>
</dbReference>
<dbReference type="Gene3D" id="1.10.10.10">
    <property type="entry name" value="Winged helix-like DNA-binding domain superfamily/Winged helix DNA-binding domain"/>
    <property type="match status" value="1"/>
</dbReference>
<dbReference type="HAMAP" id="MF_00081">
    <property type="entry name" value="HrcA"/>
    <property type="match status" value="1"/>
</dbReference>
<dbReference type="InterPro" id="IPR029016">
    <property type="entry name" value="GAF-like_dom_sf"/>
</dbReference>
<dbReference type="InterPro" id="IPR002571">
    <property type="entry name" value="HrcA"/>
</dbReference>
<dbReference type="InterPro" id="IPR021153">
    <property type="entry name" value="HrcA_C"/>
</dbReference>
<dbReference type="InterPro" id="IPR036388">
    <property type="entry name" value="WH-like_DNA-bd_sf"/>
</dbReference>
<dbReference type="InterPro" id="IPR036390">
    <property type="entry name" value="WH_DNA-bd_sf"/>
</dbReference>
<dbReference type="InterPro" id="IPR023120">
    <property type="entry name" value="WHTH_transcript_rep_HrcA_IDD"/>
</dbReference>
<dbReference type="NCBIfam" id="TIGR00331">
    <property type="entry name" value="hrcA"/>
    <property type="match status" value="1"/>
</dbReference>
<dbReference type="PANTHER" id="PTHR34824">
    <property type="entry name" value="HEAT-INDUCIBLE TRANSCRIPTION REPRESSOR HRCA"/>
    <property type="match status" value="1"/>
</dbReference>
<dbReference type="PANTHER" id="PTHR34824:SF1">
    <property type="entry name" value="HEAT-INDUCIBLE TRANSCRIPTION REPRESSOR HRCA"/>
    <property type="match status" value="1"/>
</dbReference>
<dbReference type="Pfam" id="PF01628">
    <property type="entry name" value="HrcA"/>
    <property type="match status" value="1"/>
</dbReference>
<dbReference type="PIRSF" id="PIRSF005485">
    <property type="entry name" value="HrcA"/>
    <property type="match status" value="1"/>
</dbReference>
<dbReference type="SUPFAM" id="SSF55781">
    <property type="entry name" value="GAF domain-like"/>
    <property type="match status" value="1"/>
</dbReference>
<dbReference type="SUPFAM" id="SSF46785">
    <property type="entry name" value="Winged helix' DNA-binding domain"/>
    <property type="match status" value="1"/>
</dbReference>
<keyword id="KW-1185">Reference proteome</keyword>
<keyword id="KW-0678">Repressor</keyword>
<keyword id="KW-0346">Stress response</keyword>
<keyword id="KW-0804">Transcription</keyword>
<keyword id="KW-0805">Transcription regulation</keyword>
<protein>
    <recommendedName>
        <fullName evidence="1">Heat-inducible transcription repressor HrcA</fullName>
    </recommendedName>
</protein>
<organism>
    <name type="scientific">Bacillus licheniformis (strain ATCC 14580 / DSM 13 / JCM 2505 / CCUG 7422 / NBRC 12200 / NCIMB 9375 / NCTC 10341 / NRRL NRS-1264 / Gibson 46)</name>
    <dbReference type="NCBI Taxonomy" id="279010"/>
    <lineage>
        <taxon>Bacteria</taxon>
        <taxon>Bacillati</taxon>
        <taxon>Bacillota</taxon>
        <taxon>Bacilli</taxon>
        <taxon>Bacillales</taxon>
        <taxon>Bacillaceae</taxon>
        <taxon>Bacillus</taxon>
    </lineage>
</organism>
<sequence>MLTNRQLLILQVIVNDFIRSAQPVGSRTLSKKEDITFSSATIRNEMADLEELGFIEKTHSSSGRIPSEKGYRYYVDHLLSPGKLSKTDLNIIHSIFKEKIFELEKAVQKSAQVLSDLTNYTSIVLGPRLSENHLKQIQIVPIQPKKAVAILVTNTGHVENKTINFPAEVDLSDLEKLVNILNERLRGVPISELKDRIFKEVVIFLKSHIQNYDTILHALGATLDSSVQTDRLFFGGKINMLNQPEFHDIDRVKSLLSLIEKEQEILRLFQSTESGITIKIGKENDYEEMENCSLITATYTVGSKQIGSIAVIGPTRMDYSRVVGLLQHVSSDLSKALTSLYDG</sequence>
<evidence type="ECO:0000255" key="1">
    <source>
        <dbReference type="HAMAP-Rule" id="MF_00081"/>
    </source>
</evidence>
<reference key="1">
    <citation type="journal article" date="2004" name="J. Mol. Microbiol. Biotechnol.">
        <title>The complete genome sequence of Bacillus licheniformis DSM13, an organism with great industrial potential.</title>
        <authorList>
            <person name="Veith B."/>
            <person name="Herzberg C."/>
            <person name="Steckel S."/>
            <person name="Feesche J."/>
            <person name="Maurer K.H."/>
            <person name="Ehrenreich P."/>
            <person name="Baeumer S."/>
            <person name="Henne A."/>
            <person name="Liesegang H."/>
            <person name="Merkl R."/>
            <person name="Ehrenreich A."/>
            <person name="Gottschalk G."/>
        </authorList>
    </citation>
    <scope>NUCLEOTIDE SEQUENCE [LARGE SCALE GENOMIC DNA]</scope>
    <source>
        <strain>ATCC 14580 / DSM 13 / JCM 2505 / CCUG 7422 / NBRC 12200 / NCIMB 9375 / NCTC 10341 / NRRL NRS-1264 / Gibson 46</strain>
    </source>
</reference>
<reference key="2">
    <citation type="journal article" date="2004" name="Genome Biol.">
        <title>Complete genome sequence of the industrial bacterium Bacillus licheniformis and comparisons with closely related Bacillus species.</title>
        <authorList>
            <person name="Rey M.W."/>
            <person name="Ramaiya P."/>
            <person name="Nelson B.A."/>
            <person name="Brody-Karpin S.D."/>
            <person name="Zaretsky E.J."/>
            <person name="Tang M."/>
            <person name="Lopez de Leon A."/>
            <person name="Xiang H."/>
            <person name="Gusti V."/>
            <person name="Clausen I.G."/>
            <person name="Olsen P.B."/>
            <person name="Rasmussen M.D."/>
            <person name="Andersen J.T."/>
            <person name="Joergensen P.L."/>
            <person name="Larsen T.S."/>
            <person name="Sorokin A."/>
            <person name="Bolotin A."/>
            <person name="Lapidus A."/>
            <person name="Galleron N."/>
            <person name="Ehrlich S.D."/>
            <person name="Berka R.M."/>
        </authorList>
    </citation>
    <scope>NUCLEOTIDE SEQUENCE [LARGE SCALE GENOMIC DNA]</scope>
    <source>
        <strain>ATCC 14580 / DSM 13 / JCM 2505 / CCUG 7422 / NBRC 12200 / NCIMB 9375 / NCTC 10341 / NRRL NRS-1264 / Gibson 46</strain>
    </source>
</reference>